<gene>
    <name evidence="1" type="primary">purA</name>
    <name type="ordered locus">spyM18_0156</name>
</gene>
<reference key="1">
    <citation type="journal article" date="2002" name="Proc. Natl. Acad. Sci. U.S.A.">
        <title>Genome sequence and comparative microarray analysis of serotype M18 group A Streptococcus strains associated with acute rheumatic fever outbreaks.</title>
        <authorList>
            <person name="Smoot J.C."/>
            <person name="Barbian K.D."/>
            <person name="Van Gompel J.J."/>
            <person name="Smoot L.M."/>
            <person name="Chaussee M.S."/>
            <person name="Sylva G.L."/>
            <person name="Sturdevant D.E."/>
            <person name="Ricklefs S.M."/>
            <person name="Porcella S.F."/>
            <person name="Parkins L.D."/>
            <person name="Beres S.B."/>
            <person name="Campbell D.S."/>
            <person name="Smith T.M."/>
            <person name="Zhang Q."/>
            <person name="Kapur V."/>
            <person name="Daly J.A."/>
            <person name="Veasy L.G."/>
            <person name="Musser J.M."/>
        </authorList>
    </citation>
    <scope>NUCLEOTIDE SEQUENCE [LARGE SCALE GENOMIC DNA]</scope>
    <source>
        <strain>MGAS8232</strain>
    </source>
</reference>
<proteinExistence type="inferred from homology"/>
<sequence length="430" mass="47393">MTSVVVVGTQWGDEGKGKITDFLSADAEVIARYQGGDNAGHTIVIDGKKFKLHLIPSGIFFPQKISVIGNGVVVNPKSLVKELAYLHDEGVTTDNLRISDRAHVILPYHIQLDQLQEDAKGDNKIGTTIKGIGPAYMDKAARVGIRIADLLDKDIFAERLRINLAEKNRLFEKMYDSTPLDFDAIFEEYYAYGQEIKQYVTDTSVILNDALDAGKRVLFEGAQGVMLDIDQGTYPFVTSSNPVAGGVTIGSGVGPSKINKVVGVCKAYTSRVGDGPFPTELFDEVGERIREVGHEYGTTTGRPRRVGWFDSVVMRHSRRVSGITNLSLNSIDVLSGLDAVKICVAYDLDGERIDYYPASLEQLKRCKPIYEELPGWQEDITGVRSLDELPENARNYVRRIGELVGVRISTFSVGPGREQTNILESVWASI</sequence>
<accession>Q8P2U1</accession>
<comment type="function">
    <text evidence="1">Plays an important role in the de novo pathway of purine nucleotide biosynthesis. Catalyzes the first committed step in the biosynthesis of AMP from IMP.</text>
</comment>
<comment type="catalytic activity">
    <reaction evidence="1">
        <text>IMP + L-aspartate + GTP = N(6)-(1,2-dicarboxyethyl)-AMP + GDP + phosphate + 2 H(+)</text>
        <dbReference type="Rhea" id="RHEA:15753"/>
        <dbReference type="ChEBI" id="CHEBI:15378"/>
        <dbReference type="ChEBI" id="CHEBI:29991"/>
        <dbReference type="ChEBI" id="CHEBI:37565"/>
        <dbReference type="ChEBI" id="CHEBI:43474"/>
        <dbReference type="ChEBI" id="CHEBI:57567"/>
        <dbReference type="ChEBI" id="CHEBI:58053"/>
        <dbReference type="ChEBI" id="CHEBI:58189"/>
        <dbReference type="EC" id="6.3.4.4"/>
    </reaction>
</comment>
<comment type="cofactor">
    <cofactor evidence="1">
        <name>Mg(2+)</name>
        <dbReference type="ChEBI" id="CHEBI:18420"/>
    </cofactor>
    <text evidence="1">Binds 1 Mg(2+) ion per subunit.</text>
</comment>
<comment type="pathway">
    <text evidence="1">Purine metabolism; AMP biosynthesis via de novo pathway; AMP from IMP: step 1/2.</text>
</comment>
<comment type="subunit">
    <text evidence="1">Homodimer.</text>
</comment>
<comment type="subcellular location">
    <subcellularLocation>
        <location evidence="1">Cytoplasm</location>
    </subcellularLocation>
</comment>
<comment type="similarity">
    <text evidence="1">Belongs to the adenylosuccinate synthetase family.</text>
</comment>
<evidence type="ECO:0000255" key="1">
    <source>
        <dbReference type="HAMAP-Rule" id="MF_00011"/>
    </source>
</evidence>
<dbReference type="EC" id="6.3.4.4" evidence="1"/>
<dbReference type="EMBL" id="AE009949">
    <property type="protein sequence ID" value="AAL96963.1"/>
    <property type="molecule type" value="Genomic_DNA"/>
</dbReference>
<dbReference type="RefSeq" id="WP_011017279.1">
    <property type="nucleotide sequence ID" value="NC_003485.1"/>
</dbReference>
<dbReference type="SMR" id="Q8P2U1"/>
<dbReference type="KEGG" id="spm:spyM18_0156"/>
<dbReference type="HOGENOM" id="CLU_029848_0_0_9"/>
<dbReference type="UniPathway" id="UPA00075">
    <property type="reaction ID" value="UER00335"/>
</dbReference>
<dbReference type="GO" id="GO:0005737">
    <property type="term" value="C:cytoplasm"/>
    <property type="evidence" value="ECO:0007669"/>
    <property type="project" value="UniProtKB-SubCell"/>
</dbReference>
<dbReference type="GO" id="GO:0004019">
    <property type="term" value="F:adenylosuccinate synthase activity"/>
    <property type="evidence" value="ECO:0007669"/>
    <property type="project" value="UniProtKB-UniRule"/>
</dbReference>
<dbReference type="GO" id="GO:0005525">
    <property type="term" value="F:GTP binding"/>
    <property type="evidence" value="ECO:0007669"/>
    <property type="project" value="UniProtKB-UniRule"/>
</dbReference>
<dbReference type="GO" id="GO:0000287">
    <property type="term" value="F:magnesium ion binding"/>
    <property type="evidence" value="ECO:0007669"/>
    <property type="project" value="UniProtKB-UniRule"/>
</dbReference>
<dbReference type="GO" id="GO:0044208">
    <property type="term" value="P:'de novo' AMP biosynthetic process"/>
    <property type="evidence" value="ECO:0007669"/>
    <property type="project" value="UniProtKB-UniRule"/>
</dbReference>
<dbReference type="GO" id="GO:0046040">
    <property type="term" value="P:IMP metabolic process"/>
    <property type="evidence" value="ECO:0007669"/>
    <property type="project" value="TreeGrafter"/>
</dbReference>
<dbReference type="CDD" id="cd03108">
    <property type="entry name" value="AdSS"/>
    <property type="match status" value="1"/>
</dbReference>
<dbReference type="FunFam" id="1.10.300.10:FF:000001">
    <property type="entry name" value="Adenylosuccinate synthetase"/>
    <property type="match status" value="1"/>
</dbReference>
<dbReference type="FunFam" id="3.90.170.10:FF:000001">
    <property type="entry name" value="Adenylosuccinate synthetase"/>
    <property type="match status" value="1"/>
</dbReference>
<dbReference type="Gene3D" id="3.40.440.10">
    <property type="entry name" value="Adenylosuccinate Synthetase, subunit A, domain 1"/>
    <property type="match status" value="1"/>
</dbReference>
<dbReference type="Gene3D" id="1.10.300.10">
    <property type="entry name" value="Adenylosuccinate Synthetase, subunit A, domain 2"/>
    <property type="match status" value="1"/>
</dbReference>
<dbReference type="Gene3D" id="3.90.170.10">
    <property type="entry name" value="Adenylosuccinate Synthetase, subunit A, domain 3"/>
    <property type="match status" value="1"/>
</dbReference>
<dbReference type="HAMAP" id="MF_00011">
    <property type="entry name" value="Adenylosucc_synth"/>
    <property type="match status" value="1"/>
</dbReference>
<dbReference type="InterPro" id="IPR018220">
    <property type="entry name" value="Adenylosuccin_syn_GTP-bd"/>
</dbReference>
<dbReference type="InterPro" id="IPR033128">
    <property type="entry name" value="Adenylosuccin_syn_Lys_AS"/>
</dbReference>
<dbReference type="InterPro" id="IPR042109">
    <property type="entry name" value="Adenylosuccinate_synth_dom1"/>
</dbReference>
<dbReference type="InterPro" id="IPR042110">
    <property type="entry name" value="Adenylosuccinate_synth_dom2"/>
</dbReference>
<dbReference type="InterPro" id="IPR042111">
    <property type="entry name" value="Adenylosuccinate_synth_dom3"/>
</dbReference>
<dbReference type="InterPro" id="IPR001114">
    <property type="entry name" value="Adenylosuccinate_synthetase"/>
</dbReference>
<dbReference type="InterPro" id="IPR027417">
    <property type="entry name" value="P-loop_NTPase"/>
</dbReference>
<dbReference type="NCBIfam" id="NF002223">
    <property type="entry name" value="PRK01117.1"/>
    <property type="match status" value="1"/>
</dbReference>
<dbReference type="NCBIfam" id="TIGR00184">
    <property type="entry name" value="purA"/>
    <property type="match status" value="1"/>
</dbReference>
<dbReference type="PANTHER" id="PTHR11846">
    <property type="entry name" value="ADENYLOSUCCINATE SYNTHETASE"/>
    <property type="match status" value="1"/>
</dbReference>
<dbReference type="PANTHER" id="PTHR11846:SF0">
    <property type="entry name" value="ADENYLOSUCCINATE SYNTHETASE"/>
    <property type="match status" value="1"/>
</dbReference>
<dbReference type="Pfam" id="PF00709">
    <property type="entry name" value="Adenylsucc_synt"/>
    <property type="match status" value="1"/>
</dbReference>
<dbReference type="SMART" id="SM00788">
    <property type="entry name" value="Adenylsucc_synt"/>
    <property type="match status" value="1"/>
</dbReference>
<dbReference type="SUPFAM" id="SSF52540">
    <property type="entry name" value="P-loop containing nucleoside triphosphate hydrolases"/>
    <property type="match status" value="1"/>
</dbReference>
<dbReference type="PROSITE" id="PS01266">
    <property type="entry name" value="ADENYLOSUCCIN_SYN_1"/>
    <property type="match status" value="1"/>
</dbReference>
<dbReference type="PROSITE" id="PS00513">
    <property type="entry name" value="ADENYLOSUCCIN_SYN_2"/>
    <property type="match status" value="1"/>
</dbReference>
<keyword id="KW-0963">Cytoplasm</keyword>
<keyword id="KW-0342">GTP-binding</keyword>
<keyword id="KW-0436">Ligase</keyword>
<keyword id="KW-0460">Magnesium</keyword>
<keyword id="KW-0479">Metal-binding</keyword>
<keyword id="KW-0547">Nucleotide-binding</keyword>
<keyword id="KW-0658">Purine biosynthesis</keyword>
<organism>
    <name type="scientific">Streptococcus pyogenes serotype M18 (strain MGAS8232)</name>
    <dbReference type="NCBI Taxonomy" id="186103"/>
    <lineage>
        <taxon>Bacteria</taxon>
        <taxon>Bacillati</taxon>
        <taxon>Bacillota</taxon>
        <taxon>Bacilli</taxon>
        <taxon>Lactobacillales</taxon>
        <taxon>Streptococcaceae</taxon>
        <taxon>Streptococcus</taxon>
    </lineage>
</organism>
<protein>
    <recommendedName>
        <fullName evidence="1">Adenylosuccinate synthetase</fullName>
        <shortName evidence="1">AMPSase</shortName>
        <shortName evidence="1">AdSS</shortName>
        <ecNumber evidence="1">6.3.4.4</ecNumber>
    </recommendedName>
    <alternativeName>
        <fullName evidence="1">IMP--aspartate ligase</fullName>
    </alternativeName>
</protein>
<name>PURA_STRP8</name>
<feature type="chain" id="PRO_0000095244" description="Adenylosuccinate synthetase">
    <location>
        <begin position="1"/>
        <end position="430"/>
    </location>
</feature>
<feature type="active site" description="Proton acceptor" evidence="1">
    <location>
        <position position="13"/>
    </location>
</feature>
<feature type="active site" description="Proton donor" evidence="1">
    <location>
        <position position="41"/>
    </location>
</feature>
<feature type="binding site" evidence="1">
    <location>
        <begin position="12"/>
        <end position="18"/>
    </location>
    <ligand>
        <name>GTP</name>
        <dbReference type="ChEBI" id="CHEBI:37565"/>
    </ligand>
</feature>
<feature type="binding site" description="in other chain" evidence="1">
    <location>
        <begin position="13"/>
        <end position="16"/>
    </location>
    <ligand>
        <name>IMP</name>
        <dbReference type="ChEBI" id="CHEBI:58053"/>
        <note>ligand shared between dimeric partners</note>
    </ligand>
</feature>
<feature type="binding site" evidence="1">
    <location>
        <position position="13"/>
    </location>
    <ligand>
        <name>Mg(2+)</name>
        <dbReference type="ChEBI" id="CHEBI:18420"/>
    </ligand>
</feature>
<feature type="binding site" description="in other chain" evidence="1">
    <location>
        <begin position="38"/>
        <end position="41"/>
    </location>
    <ligand>
        <name>IMP</name>
        <dbReference type="ChEBI" id="CHEBI:58053"/>
        <note>ligand shared between dimeric partners</note>
    </ligand>
</feature>
<feature type="binding site" evidence="1">
    <location>
        <begin position="40"/>
        <end position="42"/>
    </location>
    <ligand>
        <name>GTP</name>
        <dbReference type="ChEBI" id="CHEBI:37565"/>
    </ligand>
</feature>
<feature type="binding site" evidence="1">
    <location>
        <position position="40"/>
    </location>
    <ligand>
        <name>Mg(2+)</name>
        <dbReference type="ChEBI" id="CHEBI:18420"/>
    </ligand>
</feature>
<feature type="binding site" description="in other chain" evidence="1">
    <location>
        <position position="128"/>
    </location>
    <ligand>
        <name>IMP</name>
        <dbReference type="ChEBI" id="CHEBI:58053"/>
        <note>ligand shared between dimeric partners</note>
    </ligand>
</feature>
<feature type="binding site" evidence="1">
    <location>
        <position position="142"/>
    </location>
    <ligand>
        <name>IMP</name>
        <dbReference type="ChEBI" id="CHEBI:58053"/>
        <note>ligand shared between dimeric partners</note>
    </ligand>
</feature>
<feature type="binding site" description="in other chain" evidence="1">
    <location>
        <position position="223"/>
    </location>
    <ligand>
        <name>IMP</name>
        <dbReference type="ChEBI" id="CHEBI:58053"/>
        <note>ligand shared between dimeric partners</note>
    </ligand>
</feature>
<feature type="binding site" description="in other chain" evidence="1">
    <location>
        <position position="238"/>
    </location>
    <ligand>
        <name>IMP</name>
        <dbReference type="ChEBI" id="CHEBI:58053"/>
        <note>ligand shared between dimeric partners</note>
    </ligand>
</feature>
<feature type="binding site" evidence="1">
    <location>
        <begin position="298"/>
        <end position="304"/>
    </location>
    <ligand>
        <name>substrate</name>
    </ligand>
</feature>
<feature type="binding site" description="in other chain" evidence="1">
    <location>
        <position position="302"/>
    </location>
    <ligand>
        <name>IMP</name>
        <dbReference type="ChEBI" id="CHEBI:58053"/>
        <note>ligand shared between dimeric partners</note>
    </ligand>
</feature>
<feature type="binding site" evidence="1">
    <location>
        <position position="304"/>
    </location>
    <ligand>
        <name>GTP</name>
        <dbReference type="ChEBI" id="CHEBI:37565"/>
    </ligand>
</feature>
<feature type="binding site" evidence="1">
    <location>
        <begin position="330"/>
        <end position="332"/>
    </location>
    <ligand>
        <name>GTP</name>
        <dbReference type="ChEBI" id="CHEBI:37565"/>
    </ligand>
</feature>
<feature type="binding site" evidence="1">
    <location>
        <begin position="412"/>
        <end position="414"/>
    </location>
    <ligand>
        <name>GTP</name>
        <dbReference type="ChEBI" id="CHEBI:37565"/>
    </ligand>
</feature>